<feature type="chain" id="PRO_1000081136" description="Ion-translocating oxidoreductase complex subunit A">
    <location>
        <begin position="1"/>
        <end position="192"/>
    </location>
</feature>
<feature type="transmembrane region" description="Helical" evidence="1">
    <location>
        <begin position="5"/>
        <end position="25"/>
    </location>
</feature>
<feature type="transmembrane region" description="Helical" evidence="1">
    <location>
        <begin position="39"/>
        <end position="59"/>
    </location>
</feature>
<feature type="transmembrane region" description="Helical" evidence="1">
    <location>
        <begin position="65"/>
        <end position="85"/>
    </location>
</feature>
<feature type="transmembrane region" description="Helical" evidence="1">
    <location>
        <begin position="102"/>
        <end position="122"/>
    </location>
</feature>
<feature type="transmembrane region" description="Helical" evidence="1">
    <location>
        <begin position="134"/>
        <end position="154"/>
    </location>
</feature>
<feature type="transmembrane region" description="Helical" evidence="1">
    <location>
        <begin position="171"/>
        <end position="191"/>
    </location>
</feature>
<accession>A8FUY0</accession>
<sequence length="192" mass="20728">MSEYLLLLISTVLVNNFVLVKFLGLCPFMGVSSKLESAIGMSMATTFVLTLASVLSYLVNQYLLLPFELGYLRTMSFILVIAVVVQFTEMLVQKTSASLYRALGIYLPLITTNCAVLGVALLNISEKHNFIESAIYGFGAAVGFSLVLILFSAMRERLAAADVPLPFRGGAIAMITAGLMSLAFMGFTGLVK</sequence>
<protein>
    <recommendedName>
        <fullName evidence="1">Ion-translocating oxidoreductase complex subunit A</fullName>
        <ecNumber evidence="1">7.-.-.-</ecNumber>
    </recommendedName>
    <alternativeName>
        <fullName evidence="1">Rnf electron transport complex subunit A</fullName>
    </alternativeName>
</protein>
<gene>
    <name evidence="1" type="primary">rnfA</name>
    <name type="ordered locus">Ssed_2044</name>
</gene>
<proteinExistence type="inferred from homology"/>
<comment type="function">
    <text evidence="1">Part of a membrane-bound complex that couples electron transfer with translocation of ions across the membrane.</text>
</comment>
<comment type="subunit">
    <text evidence="1">The complex is composed of six subunits: RnfA, RnfB, RnfC, RnfD, RnfE and RnfG.</text>
</comment>
<comment type="subcellular location">
    <subcellularLocation>
        <location evidence="1">Cell inner membrane</location>
        <topology evidence="1">Multi-pass membrane protein</topology>
    </subcellularLocation>
</comment>
<comment type="similarity">
    <text evidence="1">Belongs to the NqrDE/RnfAE family.</text>
</comment>
<reference key="1">
    <citation type="submission" date="2007-08" db="EMBL/GenBank/DDBJ databases">
        <title>Complete sequence of Shewanella sediminis HAW-EB3.</title>
        <authorList>
            <consortium name="US DOE Joint Genome Institute"/>
            <person name="Copeland A."/>
            <person name="Lucas S."/>
            <person name="Lapidus A."/>
            <person name="Barry K."/>
            <person name="Glavina del Rio T."/>
            <person name="Dalin E."/>
            <person name="Tice H."/>
            <person name="Pitluck S."/>
            <person name="Chertkov O."/>
            <person name="Brettin T."/>
            <person name="Bruce D."/>
            <person name="Detter J.C."/>
            <person name="Han C."/>
            <person name="Schmutz J."/>
            <person name="Larimer F."/>
            <person name="Land M."/>
            <person name="Hauser L."/>
            <person name="Kyrpides N."/>
            <person name="Kim E."/>
            <person name="Zhao J.-S."/>
            <person name="Richardson P."/>
        </authorList>
    </citation>
    <scope>NUCLEOTIDE SEQUENCE [LARGE SCALE GENOMIC DNA]</scope>
    <source>
        <strain>HAW-EB3</strain>
    </source>
</reference>
<evidence type="ECO:0000255" key="1">
    <source>
        <dbReference type="HAMAP-Rule" id="MF_00459"/>
    </source>
</evidence>
<name>RNFA_SHESH</name>
<keyword id="KW-0997">Cell inner membrane</keyword>
<keyword id="KW-1003">Cell membrane</keyword>
<keyword id="KW-0249">Electron transport</keyword>
<keyword id="KW-0472">Membrane</keyword>
<keyword id="KW-1185">Reference proteome</keyword>
<keyword id="KW-1278">Translocase</keyword>
<keyword id="KW-0812">Transmembrane</keyword>
<keyword id="KW-1133">Transmembrane helix</keyword>
<keyword id="KW-0813">Transport</keyword>
<organism>
    <name type="scientific">Shewanella sediminis (strain HAW-EB3)</name>
    <dbReference type="NCBI Taxonomy" id="425104"/>
    <lineage>
        <taxon>Bacteria</taxon>
        <taxon>Pseudomonadati</taxon>
        <taxon>Pseudomonadota</taxon>
        <taxon>Gammaproteobacteria</taxon>
        <taxon>Alteromonadales</taxon>
        <taxon>Shewanellaceae</taxon>
        <taxon>Shewanella</taxon>
    </lineage>
</organism>
<dbReference type="EC" id="7.-.-.-" evidence="1"/>
<dbReference type="EMBL" id="CP000821">
    <property type="protein sequence ID" value="ABV36653.1"/>
    <property type="molecule type" value="Genomic_DNA"/>
</dbReference>
<dbReference type="SMR" id="A8FUY0"/>
<dbReference type="STRING" id="425104.Ssed_2044"/>
<dbReference type="KEGG" id="sse:Ssed_2044"/>
<dbReference type="eggNOG" id="COG4657">
    <property type="taxonomic scope" value="Bacteria"/>
</dbReference>
<dbReference type="HOGENOM" id="CLU_095255_1_0_6"/>
<dbReference type="OrthoDB" id="9803631at2"/>
<dbReference type="Proteomes" id="UP000002015">
    <property type="component" value="Chromosome"/>
</dbReference>
<dbReference type="GO" id="GO:0005886">
    <property type="term" value="C:plasma membrane"/>
    <property type="evidence" value="ECO:0007669"/>
    <property type="project" value="UniProtKB-SubCell"/>
</dbReference>
<dbReference type="GO" id="GO:0022900">
    <property type="term" value="P:electron transport chain"/>
    <property type="evidence" value="ECO:0007669"/>
    <property type="project" value="UniProtKB-UniRule"/>
</dbReference>
<dbReference type="HAMAP" id="MF_00459">
    <property type="entry name" value="RsxA_RnfA"/>
    <property type="match status" value="1"/>
</dbReference>
<dbReference type="InterPro" id="IPR011293">
    <property type="entry name" value="Ion_transpt_RnfA/RsxA"/>
</dbReference>
<dbReference type="InterPro" id="IPR003667">
    <property type="entry name" value="NqrDE/RnfAE"/>
</dbReference>
<dbReference type="InterPro" id="IPR050133">
    <property type="entry name" value="NqrDE/RnfAE_oxidrdctase"/>
</dbReference>
<dbReference type="NCBIfam" id="NF003481">
    <property type="entry name" value="PRK05151.1"/>
    <property type="match status" value="1"/>
</dbReference>
<dbReference type="NCBIfam" id="TIGR01943">
    <property type="entry name" value="rnfA"/>
    <property type="match status" value="1"/>
</dbReference>
<dbReference type="PANTHER" id="PTHR30335">
    <property type="entry name" value="INTEGRAL MEMBRANE PROTEIN OF SOXR-REDUCING COMPLEX"/>
    <property type="match status" value="1"/>
</dbReference>
<dbReference type="PANTHER" id="PTHR30335:SF0">
    <property type="entry name" value="ION-TRANSLOCATING OXIDOREDUCTASE COMPLEX SUBUNIT A"/>
    <property type="match status" value="1"/>
</dbReference>
<dbReference type="Pfam" id="PF02508">
    <property type="entry name" value="Rnf-Nqr"/>
    <property type="match status" value="1"/>
</dbReference>
<dbReference type="PIRSF" id="PIRSF006102">
    <property type="entry name" value="NQR_DE"/>
    <property type="match status" value="1"/>
</dbReference>